<keyword id="KW-1015">Disulfide bond</keyword>
<keyword id="KW-0960">Knottin</keyword>
<keyword id="KW-0964">Secreted</keyword>
<keyword id="KW-0732">Signal</keyword>
<keyword id="KW-0800">Toxin</keyword>
<sequence>MKFVLLFGVLLVTLFSYSSAEMLDDFDQADEDELLSLIEKEEARAKECTPRFYDCSHDRHSCCRSELFKDVCTCFYPEGGDNEVRTCQQPKHLKYMEKAADKAKKFGGKIKKWFG</sequence>
<dbReference type="EMBL" id="EU925985">
    <property type="protein sequence ID" value="ACI41317.1"/>
    <property type="molecule type" value="mRNA"/>
</dbReference>
<dbReference type="EMBL" id="FM863989">
    <property type="protein sequence ID" value="CAS03587.1"/>
    <property type="molecule type" value="mRNA"/>
</dbReference>
<dbReference type="SMR" id="B6DCQ1"/>
<dbReference type="ArachnoServer" id="AS000934">
    <property type="toxin name" value="U3-lycotoxin-Ls1u"/>
</dbReference>
<dbReference type="GO" id="GO:0005576">
    <property type="term" value="C:extracellular region"/>
    <property type="evidence" value="ECO:0007669"/>
    <property type="project" value="UniProtKB-SubCell"/>
</dbReference>
<dbReference type="GO" id="GO:0090729">
    <property type="term" value="F:toxin activity"/>
    <property type="evidence" value="ECO:0007669"/>
    <property type="project" value="UniProtKB-KW"/>
</dbReference>
<dbReference type="InterPro" id="IPR011142">
    <property type="entry name" value="Spider_toxin_CSTX_Knottin_CS"/>
</dbReference>
<dbReference type="PROSITE" id="PS60029">
    <property type="entry name" value="SPIDER_CSTX"/>
    <property type="match status" value="1"/>
</dbReference>
<comment type="subcellular location">
    <subcellularLocation>
        <location evidence="1">Secreted</location>
    </subcellularLocation>
</comment>
<comment type="tissue specificity">
    <text>Expressed by the venom gland.</text>
</comment>
<comment type="domain">
    <text evidence="1">The presence of a 'disulfide through disulfide knot' structurally defines this protein as a knottin.</text>
</comment>
<comment type="similarity">
    <text evidence="3">Belongs to the neurotoxin 19 (CSTX) family. 01 subfamily.</text>
</comment>
<accession>B6DCQ1</accession>
<evidence type="ECO:0000250" key="1"/>
<evidence type="ECO:0000255" key="2"/>
<evidence type="ECO:0000305" key="3"/>
<feature type="signal peptide" evidence="2">
    <location>
        <begin position="1"/>
        <end position="20"/>
    </location>
</feature>
<feature type="propeptide" id="PRO_0000401617" evidence="1">
    <location>
        <begin position="21"/>
        <end position="44"/>
    </location>
</feature>
<feature type="chain" id="PRO_0000401618" description="U3-lycotoxin-Ls1u">
    <location>
        <begin position="45"/>
        <end position="115"/>
    </location>
</feature>
<feature type="disulfide bond" evidence="1">
    <location>
        <begin position="48"/>
        <end position="63"/>
    </location>
</feature>
<feature type="disulfide bond" evidence="1">
    <location>
        <begin position="55"/>
        <end position="72"/>
    </location>
</feature>
<feature type="disulfide bond" evidence="1">
    <location>
        <begin position="62"/>
        <end position="87"/>
    </location>
</feature>
<reference key="1">
    <citation type="journal article" date="2010" name="Zoology">
        <title>Transcriptome analysis of the venom glands of the Chinese wolf spider Lycosa singoriensis.</title>
        <authorList>
            <person name="Zhang Y."/>
            <person name="Chen J."/>
            <person name="Tang X."/>
            <person name="Wang F."/>
            <person name="Jiang L."/>
            <person name="Xiong X."/>
            <person name="Wang M."/>
            <person name="Rong M."/>
            <person name="Liu Z."/>
            <person name="Liang S."/>
        </authorList>
    </citation>
    <scope>NUCLEOTIDE SEQUENCE [LARGE SCALE MRNA]</scope>
    <source>
        <tissue>Venom gland</tissue>
    </source>
</reference>
<protein>
    <recommendedName>
        <fullName>U3-lycotoxin-Ls1u</fullName>
    </recommendedName>
    <alternativeName>
        <fullName>Toxin-like structure LSTX-B6</fullName>
    </alternativeName>
</protein>
<name>TX306_LYCSI</name>
<proteinExistence type="evidence at transcript level"/>
<organism>
    <name type="scientific">Lycosa singoriensis</name>
    <name type="common">Wolf spider</name>
    <name type="synonym">Aranea singoriensis</name>
    <dbReference type="NCBI Taxonomy" id="434756"/>
    <lineage>
        <taxon>Eukaryota</taxon>
        <taxon>Metazoa</taxon>
        <taxon>Ecdysozoa</taxon>
        <taxon>Arthropoda</taxon>
        <taxon>Chelicerata</taxon>
        <taxon>Arachnida</taxon>
        <taxon>Araneae</taxon>
        <taxon>Araneomorphae</taxon>
        <taxon>Entelegynae</taxon>
        <taxon>Lycosoidea</taxon>
        <taxon>Lycosidae</taxon>
        <taxon>Lycosa</taxon>
    </lineage>
</organism>